<comment type="function">
    <text evidence="1">One of the primary rRNA binding proteins, it binds specifically to the 5'-end of 16S ribosomal RNA.</text>
</comment>
<comment type="subunit">
    <text evidence="1">Part of the 30S ribosomal subunit.</text>
</comment>
<comment type="similarity">
    <text evidence="1">Belongs to the universal ribosomal protein uS17 family.</text>
</comment>
<name>RS17_FRATW</name>
<reference key="1">
    <citation type="journal article" date="2007" name="PLoS ONE">
        <title>Complete genomic characterization of a pathogenic A.II strain of Francisella tularensis subspecies tularensis.</title>
        <authorList>
            <person name="Beckstrom-Sternberg S.M."/>
            <person name="Auerbach R.K."/>
            <person name="Godbole S."/>
            <person name="Pearson J.V."/>
            <person name="Beckstrom-Sternberg J.S."/>
            <person name="Deng Z."/>
            <person name="Munk C."/>
            <person name="Kubota K."/>
            <person name="Zhou Y."/>
            <person name="Bruce D."/>
            <person name="Noronha J."/>
            <person name="Scheuermann R.H."/>
            <person name="Wang A."/>
            <person name="Wei X."/>
            <person name="Wang J."/>
            <person name="Hao J."/>
            <person name="Wagner D.M."/>
            <person name="Brettin T.S."/>
            <person name="Brown N."/>
            <person name="Gilna P."/>
            <person name="Keim P.S."/>
        </authorList>
    </citation>
    <scope>NUCLEOTIDE SEQUENCE [LARGE SCALE GENOMIC DNA]</scope>
    <source>
        <strain>WY96-3418</strain>
    </source>
</reference>
<feature type="chain" id="PRO_1000054956" description="Small ribosomal subunit protein uS17">
    <location>
        <begin position="1"/>
        <end position="83"/>
    </location>
</feature>
<gene>
    <name evidence="1" type="primary">rpsQ</name>
    <name type="ordered locus">FTW_1749</name>
</gene>
<evidence type="ECO:0000255" key="1">
    <source>
        <dbReference type="HAMAP-Rule" id="MF_01345"/>
    </source>
</evidence>
<evidence type="ECO:0000305" key="2"/>
<proteinExistence type="inferred from homology"/>
<organism>
    <name type="scientific">Francisella tularensis subsp. tularensis (strain WY96-3418)</name>
    <dbReference type="NCBI Taxonomy" id="418136"/>
    <lineage>
        <taxon>Bacteria</taxon>
        <taxon>Pseudomonadati</taxon>
        <taxon>Pseudomonadota</taxon>
        <taxon>Gammaproteobacteria</taxon>
        <taxon>Thiotrichales</taxon>
        <taxon>Francisellaceae</taxon>
        <taxon>Francisella</taxon>
    </lineage>
</organism>
<dbReference type="EMBL" id="CP000608">
    <property type="protein sequence ID" value="ABO47425.1"/>
    <property type="molecule type" value="Genomic_DNA"/>
</dbReference>
<dbReference type="RefSeq" id="WP_003017803.1">
    <property type="nucleotide sequence ID" value="NC_009257.1"/>
</dbReference>
<dbReference type="SMR" id="A4IZS5"/>
<dbReference type="GeneID" id="75264252"/>
<dbReference type="KEGG" id="ftw:FTW_1749"/>
<dbReference type="HOGENOM" id="CLU_073626_1_1_6"/>
<dbReference type="GO" id="GO:0022627">
    <property type="term" value="C:cytosolic small ribosomal subunit"/>
    <property type="evidence" value="ECO:0007669"/>
    <property type="project" value="TreeGrafter"/>
</dbReference>
<dbReference type="GO" id="GO:0019843">
    <property type="term" value="F:rRNA binding"/>
    <property type="evidence" value="ECO:0007669"/>
    <property type="project" value="UniProtKB-UniRule"/>
</dbReference>
<dbReference type="GO" id="GO:0003735">
    <property type="term" value="F:structural constituent of ribosome"/>
    <property type="evidence" value="ECO:0007669"/>
    <property type="project" value="InterPro"/>
</dbReference>
<dbReference type="GO" id="GO:0006412">
    <property type="term" value="P:translation"/>
    <property type="evidence" value="ECO:0007669"/>
    <property type="project" value="UniProtKB-UniRule"/>
</dbReference>
<dbReference type="CDD" id="cd00364">
    <property type="entry name" value="Ribosomal_uS17"/>
    <property type="match status" value="1"/>
</dbReference>
<dbReference type="Gene3D" id="2.40.50.140">
    <property type="entry name" value="Nucleic acid-binding proteins"/>
    <property type="match status" value="1"/>
</dbReference>
<dbReference type="HAMAP" id="MF_01345_B">
    <property type="entry name" value="Ribosomal_uS17_B"/>
    <property type="match status" value="1"/>
</dbReference>
<dbReference type="InterPro" id="IPR012340">
    <property type="entry name" value="NA-bd_OB-fold"/>
</dbReference>
<dbReference type="InterPro" id="IPR000266">
    <property type="entry name" value="Ribosomal_uS17"/>
</dbReference>
<dbReference type="InterPro" id="IPR019984">
    <property type="entry name" value="Ribosomal_uS17_bact/chlr"/>
</dbReference>
<dbReference type="NCBIfam" id="NF004123">
    <property type="entry name" value="PRK05610.1"/>
    <property type="match status" value="1"/>
</dbReference>
<dbReference type="NCBIfam" id="TIGR03635">
    <property type="entry name" value="uS17_bact"/>
    <property type="match status" value="1"/>
</dbReference>
<dbReference type="PANTHER" id="PTHR10744">
    <property type="entry name" value="40S RIBOSOMAL PROTEIN S11 FAMILY MEMBER"/>
    <property type="match status" value="1"/>
</dbReference>
<dbReference type="PANTHER" id="PTHR10744:SF1">
    <property type="entry name" value="SMALL RIBOSOMAL SUBUNIT PROTEIN US17M"/>
    <property type="match status" value="1"/>
</dbReference>
<dbReference type="Pfam" id="PF00366">
    <property type="entry name" value="Ribosomal_S17"/>
    <property type="match status" value="1"/>
</dbReference>
<dbReference type="PRINTS" id="PR00973">
    <property type="entry name" value="RIBOSOMALS17"/>
</dbReference>
<dbReference type="SUPFAM" id="SSF50249">
    <property type="entry name" value="Nucleic acid-binding proteins"/>
    <property type="match status" value="1"/>
</dbReference>
<sequence>MSDKIRLLEGKVSSVAMDKTVVVRAERYVKHPLYGKFVKKTTKYYVHDENNECKEGDVIKFKETRPYSKTKKWCLVDIIHREK</sequence>
<protein>
    <recommendedName>
        <fullName evidence="1">Small ribosomal subunit protein uS17</fullName>
    </recommendedName>
    <alternativeName>
        <fullName evidence="2">30S ribosomal protein S17</fullName>
    </alternativeName>
</protein>
<accession>A4IZS5</accession>
<keyword id="KW-0687">Ribonucleoprotein</keyword>
<keyword id="KW-0689">Ribosomal protein</keyword>
<keyword id="KW-0694">RNA-binding</keyword>
<keyword id="KW-0699">rRNA-binding</keyword>